<proteinExistence type="inferred from homology"/>
<feature type="chain" id="PRO_0000289336" description="Signal transduction protein TRAP">
    <location>
        <begin position="1"/>
        <end position="167"/>
    </location>
</feature>
<feature type="domain" description="ABM">
    <location>
        <begin position="67"/>
        <end position="158"/>
    </location>
</feature>
<feature type="modified residue" description="Phosphohistidine" evidence="1">
    <location>
        <position position="66"/>
    </location>
</feature>
<feature type="modified residue" description="Phosphohistidine" evidence="1">
    <location>
        <position position="79"/>
    </location>
</feature>
<feature type="modified residue" description="Phosphohistidine" evidence="1">
    <location>
        <position position="154"/>
    </location>
</feature>
<accession>Q2YU04</accession>
<protein>
    <recommendedName>
        <fullName>Signal transduction protein TRAP</fullName>
    </recommendedName>
    <alternativeName>
        <fullName>Target of RNAIII-activating protein</fullName>
    </alternativeName>
</protein>
<keyword id="KW-0472">Membrane</keyword>
<keyword id="KW-0597">Phosphoprotein</keyword>
<keyword id="KW-0843">Virulence</keyword>
<sequence length="167" mass="19601">MKKLYTSYGTYGFLNQIKINNPSHHLFQFSTADSSVIFEETEENTVLKSPSIYEVIKEIGAFNEDHFYCAIFIPSTEDHVYQLEKKLISVDDNFKNFGGFKSYRLLRPVKGTTYKIYFGFADRQTYEDFKNSDAFKDHFSKEALSHYFGSSGQHSSYFERYLYPIKE</sequence>
<reference key="1">
    <citation type="journal article" date="2007" name="PLoS ONE">
        <title>Molecular correlates of host specialization in Staphylococcus aureus.</title>
        <authorList>
            <person name="Herron-Olson L."/>
            <person name="Fitzgerald J.R."/>
            <person name="Musser J.M."/>
            <person name="Kapur V."/>
        </authorList>
    </citation>
    <scope>NUCLEOTIDE SEQUENCE [LARGE SCALE GENOMIC DNA]</scope>
    <source>
        <strain>bovine RF122 / ET3-1</strain>
    </source>
</reference>
<organism>
    <name type="scientific">Staphylococcus aureus (strain bovine RF122 / ET3-1)</name>
    <dbReference type="NCBI Taxonomy" id="273036"/>
    <lineage>
        <taxon>Bacteria</taxon>
        <taxon>Bacillati</taxon>
        <taxon>Bacillota</taxon>
        <taxon>Bacilli</taxon>
        <taxon>Bacillales</taxon>
        <taxon>Staphylococcaceae</taxon>
        <taxon>Staphylococcus</taxon>
    </lineage>
</organism>
<gene>
    <name type="primary">traP</name>
    <name type="ordered locus">SAB1766</name>
</gene>
<comment type="function">
    <text evidence="1">Signal transduction protein, which is a major regulator of staphylococcal pathogenesis. Phosphorylated TRAP leads to the activation of agr system and consequent RNAIII synthesis resulting in the expression of several virulence factors. Up-regulates the expression of most toxins and genes known to be necessary for biofilm formation (By similarity).</text>
</comment>
<comment type="subcellular location">
    <subcellularLocation>
        <location>Membrane</location>
    </subcellularLocation>
    <text evidence="1">Membrane-associated.</text>
</comment>
<comment type="PTM">
    <text evidence="1">Each of the three conserved histidine residues contributes to TRAP phosphorylation. Phosphorylation is essential for TRAP activity (By similarity).</text>
</comment>
<comment type="PTM">
    <text evidence="1">Phosphorylation of TRAP is activated by RAP and necessary for the induction of RNAIII gene expression but not for ongoing transcription. TRAP is dephosphorylated from the mid-exponential phase of growth, which is when agr is activated and AIP is produced. RIP acts by inhibiting TRAP phosphorylation (By similarity).</text>
</comment>
<comment type="similarity">
    <text evidence="2">Belongs to the TRAP family.</text>
</comment>
<name>TRAP_STAAB</name>
<evidence type="ECO:0000250" key="1"/>
<evidence type="ECO:0000305" key="2"/>
<dbReference type="EMBL" id="AJ938182">
    <property type="protein sequence ID" value="CAI81455.1"/>
    <property type="molecule type" value="Genomic_DNA"/>
</dbReference>
<dbReference type="RefSeq" id="WP_000737983.1">
    <property type="nucleotide sequence ID" value="NC_007622.1"/>
</dbReference>
<dbReference type="SMR" id="Q2YU04"/>
<dbReference type="KEGG" id="sab:SAB1766"/>
<dbReference type="HOGENOM" id="CLU_116220_0_0_9"/>
<dbReference type="GO" id="GO:0016020">
    <property type="term" value="C:membrane"/>
    <property type="evidence" value="ECO:0007669"/>
    <property type="project" value="UniProtKB-SubCell"/>
</dbReference>
<dbReference type="Gene3D" id="3.30.70.100">
    <property type="match status" value="1"/>
</dbReference>
<dbReference type="InterPro" id="IPR007138">
    <property type="entry name" value="ABM_dom"/>
</dbReference>
<dbReference type="InterPro" id="IPR011008">
    <property type="entry name" value="Dimeric_a/b-barrel"/>
</dbReference>
<dbReference type="InterPro" id="IPR050404">
    <property type="entry name" value="Heme-degrading_MO"/>
</dbReference>
<dbReference type="PANTHER" id="PTHR34474">
    <property type="entry name" value="SIGNAL TRANSDUCTION PROTEIN TRAP"/>
    <property type="match status" value="1"/>
</dbReference>
<dbReference type="PANTHER" id="PTHR34474:SF2">
    <property type="entry name" value="SIGNAL TRANSDUCTION PROTEIN TRAP"/>
    <property type="match status" value="1"/>
</dbReference>
<dbReference type="SUPFAM" id="SSF54909">
    <property type="entry name" value="Dimeric alpha+beta barrel"/>
    <property type="match status" value="1"/>
</dbReference>
<dbReference type="PROSITE" id="PS51725">
    <property type="entry name" value="ABM"/>
    <property type="match status" value="1"/>
</dbReference>